<comment type="function">
    <text evidence="1">ATP-dependent carboxylate-amine ligase which exhibits weak glutamate--cysteine ligase activity.</text>
</comment>
<comment type="catalytic activity">
    <reaction evidence="1">
        <text>L-cysteine + L-glutamate + ATP = gamma-L-glutamyl-L-cysteine + ADP + phosphate + H(+)</text>
        <dbReference type="Rhea" id="RHEA:13285"/>
        <dbReference type="ChEBI" id="CHEBI:15378"/>
        <dbReference type="ChEBI" id="CHEBI:29985"/>
        <dbReference type="ChEBI" id="CHEBI:30616"/>
        <dbReference type="ChEBI" id="CHEBI:35235"/>
        <dbReference type="ChEBI" id="CHEBI:43474"/>
        <dbReference type="ChEBI" id="CHEBI:58173"/>
        <dbReference type="ChEBI" id="CHEBI:456216"/>
        <dbReference type="EC" id="6.3.2.2"/>
    </reaction>
</comment>
<comment type="similarity">
    <text evidence="1">Belongs to the glutamate--cysteine ligase type 2 family. YbdK subfamily.</text>
</comment>
<name>GCS2_PSEAE</name>
<reference key="1">
    <citation type="journal article" date="2000" name="Nature">
        <title>Complete genome sequence of Pseudomonas aeruginosa PAO1, an opportunistic pathogen.</title>
        <authorList>
            <person name="Stover C.K."/>
            <person name="Pham X.-Q.T."/>
            <person name="Erwin A.L."/>
            <person name="Mizoguchi S.D."/>
            <person name="Warrener P."/>
            <person name="Hickey M.J."/>
            <person name="Brinkman F.S.L."/>
            <person name="Hufnagle W.O."/>
            <person name="Kowalik D.J."/>
            <person name="Lagrou M."/>
            <person name="Garber R.L."/>
            <person name="Goltry L."/>
            <person name="Tolentino E."/>
            <person name="Westbrock-Wadman S."/>
            <person name="Yuan Y."/>
            <person name="Brody L.L."/>
            <person name="Coulter S.N."/>
            <person name="Folger K.R."/>
            <person name="Kas A."/>
            <person name="Larbig K."/>
            <person name="Lim R.M."/>
            <person name="Smith K.A."/>
            <person name="Spencer D.H."/>
            <person name="Wong G.K.-S."/>
            <person name="Wu Z."/>
            <person name="Paulsen I.T."/>
            <person name="Reizer J."/>
            <person name="Saier M.H. Jr."/>
            <person name="Hancock R.E.W."/>
            <person name="Lory S."/>
            <person name="Olson M.V."/>
        </authorList>
    </citation>
    <scope>NUCLEOTIDE SEQUENCE [LARGE SCALE GENOMIC DNA]</scope>
    <source>
        <strain>ATCC 15692 / DSM 22644 / CIP 104116 / JCM 14847 / LMG 12228 / 1C / PRS 101 / PAO1</strain>
    </source>
</reference>
<protein>
    <recommendedName>
        <fullName evidence="1">Putative glutamate--cysteine ligase 2</fullName>
        <ecNumber evidence="1">6.3.2.2</ecNumber>
    </recommendedName>
    <alternativeName>
        <fullName evidence="1">Gamma-glutamylcysteine synthetase 2</fullName>
        <shortName evidence="1">GCS 2</shortName>
        <shortName evidence="1">Gamma-GCS 2</shortName>
    </alternativeName>
</protein>
<gene>
    <name type="ordered locus">PA2181</name>
</gene>
<proteinExistence type="inferred from homology"/>
<feature type="chain" id="PRO_0000218211" description="Putative glutamate--cysteine ligase 2">
    <location>
        <begin position="1"/>
        <end position="377"/>
    </location>
</feature>
<accession>Q9I1T4</accession>
<organism>
    <name type="scientific">Pseudomonas aeruginosa (strain ATCC 15692 / DSM 22644 / CIP 104116 / JCM 14847 / LMG 12228 / 1C / PRS 101 / PAO1)</name>
    <dbReference type="NCBI Taxonomy" id="208964"/>
    <lineage>
        <taxon>Bacteria</taxon>
        <taxon>Pseudomonadati</taxon>
        <taxon>Pseudomonadota</taxon>
        <taxon>Gammaproteobacteria</taxon>
        <taxon>Pseudomonadales</taxon>
        <taxon>Pseudomonadaceae</taxon>
        <taxon>Pseudomonas</taxon>
    </lineage>
</organism>
<dbReference type="EC" id="6.3.2.2" evidence="1"/>
<dbReference type="EMBL" id="AE004091">
    <property type="protein sequence ID" value="AAG05569.1"/>
    <property type="molecule type" value="Genomic_DNA"/>
</dbReference>
<dbReference type="PIR" id="C83372">
    <property type="entry name" value="C83372"/>
</dbReference>
<dbReference type="RefSeq" id="NP_250871.1">
    <property type="nucleotide sequence ID" value="NC_002516.2"/>
</dbReference>
<dbReference type="RefSeq" id="WP_003113671.1">
    <property type="nucleotide sequence ID" value="NZ_QZGE01000014.1"/>
</dbReference>
<dbReference type="SMR" id="Q9I1T4"/>
<dbReference type="FunCoup" id="Q9I1T4">
    <property type="interactions" value="88"/>
</dbReference>
<dbReference type="STRING" id="208964.PA2181"/>
<dbReference type="PaxDb" id="208964-PA2181"/>
<dbReference type="DNASU" id="877967"/>
<dbReference type="GeneID" id="877967"/>
<dbReference type="KEGG" id="pae:PA2181"/>
<dbReference type="PATRIC" id="fig|208964.12.peg.2284"/>
<dbReference type="PseudoCAP" id="PA2181"/>
<dbReference type="HOGENOM" id="CLU_044848_0_1_6"/>
<dbReference type="InParanoid" id="Q9I1T4"/>
<dbReference type="OrthoDB" id="9769628at2"/>
<dbReference type="PhylomeDB" id="Q9I1T4"/>
<dbReference type="BioCyc" id="PAER208964:G1FZ6-2222-MONOMER"/>
<dbReference type="Proteomes" id="UP000002438">
    <property type="component" value="Chromosome"/>
</dbReference>
<dbReference type="GO" id="GO:0005524">
    <property type="term" value="F:ATP binding"/>
    <property type="evidence" value="ECO:0007669"/>
    <property type="project" value="UniProtKB-KW"/>
</dbReference>
<dbReference type="GO" id="GO:0004357">
    <property type="term" value="F:glutamate-cysteine ligase activity"/>
    <property type="evidence" value="ECO:0007669"/>
    <property type="project" value="UniProtKB-EC"/>
</dbReference>
<dbReference type="GO" id="GO:0016879">
    <property type="term" value="F:ligase activity, forming carbon-nitrogen bonds"/>
    <property type="evidence" value="ECO:0000318"/>
    <property type="project" value="GO_Central"/>
</dbReference>
<dbReference type="GO" id="GO:0042398">
    <property type="term" value="P:modified amino acid biosynthetic process"/>
    <property type="evidence" value="ECO:0007669"/>
    <property type="project" value="InterPro"/>
</dbReference>
<dbReference type="FunFam" id="3.30.590.20:FF:000008">
    <property type="entry name" value="Putative glutamate--cysteine ligase 2"/>
    <property type="match status" value="1"/>
</dbReference>
<dbReference type="Gene3D" id="3.30.590.20">
    <property type="match status" value="1"/>
</dbReference>
<dbReference type="HAMAP" id="MF_01609">
    <property type="entry name" value="Glu_cys_ligase_2"/>
    <property type="match status" value="1"/>
</dbReference>
<dbReference type="InterPro" id="IPR050141">
    <property type="entry name" value="GCL_type2/YbdK_subfam"/>
</dbReference>
<dbReference type="InterPro" id="IPR006336">
    <property type="entry name" value="GCS2"/>
</dbReference>
<dbReference type="InterPro" id="IPR014746">
    <property type="entry name" value="Gln_synth/guanido_kin_cat_dom"/>
</dbReference>
<dbReference type="InterPro" id="IPR011793">
    <property type="entry name" value="YbdK"/>
</dbReference>
<dbReference type="NCBIfam" id="TIGR02050">
    <property type="entry name" value="gshA_cyan_rel"/>
    <property type="match status" value="1"/>
</dbReference>
<dbReference type="NCBIfam" id="NF010039">
    <property type="entry name" value="PRK13515.1"/>
    <property type="match status" value="1"/>
</dbReference>
<dbReference type="PANTHER" id="PTHR36510">
    <property type="entry name" value="GLUTAMATE--CYSTEINE LIGASE 2-RELATED"/>
    <property type="match status" value="1"/>
</dbReference>
<dbReference type="PANTHER" id="PTHR36510:SF1">
    <property type="entry name" value="GLUTAMATE--CYSTEINE LIGASE 2-RELATED"/>
    <property type="match status" value="1"/>
</dbReference>
<dbReference type="Pfam" id="PF04107">
    <property type="entry name" value="GCS2"/>
    <property type="match status" value="1"/>
</dbReference>
<dbReference type="SUPFAM" id="SSF55931">
    <property type="entry name" value="Glutamine synthetase/guanido kinase"/>
    <property type="match status" value="1"/>
</dbReference>
<sequence length="377" mass="42358">MTHDLAASGLRFGIEEEFFLLDASDLDIVRSAPAGFVAACRDTLGEHFAEEMFECQVEVASPVFSTLAEAARFHGQARQRLAHLAMDFGLRSLCVGTHPFADWRRARSNPAAHFARLFEDQGRVARRSLVCGLHVHVEIPPSHDRMAVLQRVLPWLPLLLALSASSPFRGGRRSGLASYRRALCGEWPRMNIPPALPDEDAYRRHLALLRETGCIREDGQVWWMIRPSSHVPTLELRICDACPRLADALSLAGLFRALVGEALGADPRALPVARDACLEENYWQALRYGCAGRYLVEGRCVGAGDWLEMAWRQCRPQARQGNEWAYQHACGLLEETSAARQLRRYRRLREAGQERHPALRRLVEELLEENLQPALAG</sequence>
<keyword id="KW-0067">ATP-binding</keyword>
<keyword id="KW-0436">Ligase</keyword>
<keyword id="KW-0547">Nucleotide-binding</keyword>
<keyword id="KW-1185">Reference proteome</keyword>
<evidence type="ECO:0000255" key="1">
    <source>
        <dbReference type="HAMAP-Rule" id="MF_01609"/>
    </source>
</evidence>